<proteinExistence type="evidence at transcript level"/>
<protein>
    <recommendedName>
        <fullName>FBD-associated F-box protein At1g60410</fullName>
    </recommendedName>
</protein>
<name>FBD3_ARATH</name>
<dbReference type="EMBL" id="AC004473">
    <property type="protein sequence ID" value="AAC24077.1"/>
    <property type="molecule type" value="Genomic_DNA"/>
</dbReference>
<dbReference type="EMBL" id="CP002684">
    <property type="protein sequence ID" value="AEE33683.1"/>
    <property type="molecule type" value="Genomic_DNA"/>
</dbReference>
<dbReference type="EMBL" id="BX814320">
    <property type="status" value="NOT_ANNOTATED_CDS"/>
    <property type="molecule type" value="mRNA"/>
</dbReference>
<dbReference type="PIR" id="T02291">
    <property type="entry name" value="T02291"/>
</dbReference>
<dbReference type="RefSeq" id="NP_176244.1">
    <property type="nucleotide sequence ID" value="NM_104728.3"/>
</dbReference>
<dbReference type="BioGRID" id="27560">
    <property type="interactions" value="2"/>
</dbReference>
<dbReference type="IntAct" id="O80762">
    <property type="interactions" value="2"/>
</dbReference>
<dbReference type="GlyGen" id="O80762">
    <property type="glycosylation" value="1 site"/>
</dbReference>
<dbReference type="iPTMnet" id="O80762"/>
<dbReference type="PaxDb" id="3702-AT1G60410.1"/>
<dbReference type="ProteomicsDB" id="230662"/>
<dbReference type="EnsemblPlants" id="AT1G60410.1">
    <property type="protein sequence ID" value="AT1G60410.1"/>
    <property type="gene ID" value="AT1G60410"/>
</dbReference>
<dbReference type="GeneID" id="842336"/>
<dbReference type="Gramene" id="AT1G60410.1">
    <property type="protein sequence ID" value="AT1G60410.1"/>
    <property type="gene ID" value="AT1G60410"/>
</dbReference>
<dbReference type="KEGG" id="ath:AT1G60410"/>
<dbReference type="Araport" id="AT1G60410"/>
<dbReference type="TAIR" id="AT1G60410"/>
<dbReference type="HOGENOM" id="CLU_010721_1_3_1"/>
<dbReference type="InParanoid" id="O80762"/>
<dbReference type="OMA" id="PHPEDYL"/>
<dbReference type="PhylomeDB" id="O80762"/>
<dbReference type="PRO" id="PR:O80762"/>
<dbReference type="Proteomes" id="UP000006548">
    <property type="component" value="Chromosome 1"/>
</dbReference>
<dbReference type="ExpressionAtlas" id="O80762">
    <property type="expression patterns" value="baseline and differential"/>
</dbReference>
<dbReference type="CDD" id="cd22160">
    <property type="entry name" value="F-box_AtFBL13-like"/>
    <property type="match status" value="1"/>
</dbReference>
<dbReference type="InterPro" id="IPR036047">
    <property type="entry name" value="F-box-like_dom_sf"/>
</dbReference>
<dbReference type="InterPro" id="IPR053781">
    <property type="entry name" value="F-box_AtFBL13-like"/>
</dbReference>
<dbReference type="InterPro" id="IPR001810">
    <property type="entry name" value="F-box_dom"/>
</dbReference>
<dbReference type="InterPro" id="IPR006566">
    <property type="entry name" value="FBD"/>
</dbReference>
<dbReference type="InterPro" id="IPR050232">
    <property type="entry name" value="FBL13/AtMIF1-like"/>
</dbReference>
<dbReference type="InterPro" id="IPR055411">
    <property type="entry name" value="LRR_FXL15/At3g58940/PEG3-like"/>
</dbReference>
<dbReference type="PANTHER" id="PTHR31900">
    <property type="entry name" value="F-BOX/RNI SUPERFAMILY PROTEIN-RELATED"/>
    <property type="match status" value="1"/>
</dbReference>
<dbReference type="PANTHER" id="PTHR31900:SF33">
    <property type="entry name" value="PROTEIN WITH RNI-LIKE_FBD-LIKE DOMAIN"/>
    <property type="match status" value="1"/>
</dbReference>
<dbReference type="Pfam" id="PF00646">
    <property type="entry name" value="F-box"/>
    <property type="match status" value="1"/>
</dbReference>
<dbReference type="Pfam" id="PF08387">
    <property type="entry name" value="FBD"/>
    <property type="match status" value="1"/>
</dbReference>
<dbReference type="Pfam" id="PF24758">
    <property type="entry name" value="LRR_At5g56370"/>
    <property type="match status" value="1"/>
</dbReference>
<dbReference type="SUPFAM" id="SSF81383">
    <property type="entry name" value="F-box domain"/>
    <property type="match status" value="1"/>
</dbReference>
<dbReference type="SUPFAM" id="SSF52047">
    <property type="entry name" value="RNI-like"/>
    <property type="match status" value="1"/>
</dbReference>
<dbReference type="PROSITE" id="PS50181">
    <property type="entry name" value="FBOX"/>
    <property type="match status" value="1"/>
</dbReference>
<sequence length="406" mass="46185">MARTEVSGKDRLSDLPCHLLCRILSNLSTKESVRTSVLSPRWSNLWSLVSVLDLDFQDFKGEHDMGEFIDSFMEYHEELGLKLKSFNMFYDANEHLHEPFVRRLNKVVRRGVCDLNIQNMVDVDVALVRMPPSLYSCATLVNLILYCVVFDHPRSKSVSLPSVKKMYFEGVKFDGDSVLETLISHSPVLEELTVIPHPEDYLEVICVRSQSLESFRLESKRFECDNPKVEIDSPSLEFMSICDKKPESLKIHRIGPFAEVTVDVEFDVEDDDPLEISKIRKFLVGLSTFHELTISARTLESIHDYSKVGPLPPFSNLFGLDASLVESSWEVLPAFLSCCMNLDSLVIELDCVPEMEEIKLSPVPQCVLSSLDFLQLKAPSTPSKMKLATYFRKKCTRLTKMLLSGQ</sequence>
<reference key="1">
    <citation type="journal article" date="2000" name="Nature">
        <title>Sequence and analysis of chromosome 1 of the plant Arabidopsis thaliana.</title>
        <authorList>
            <person name="Theologis A."/>
            <person name="Ecker J.R."/>
            <person name="Palm C.J."/>
            <person name="Federspiel N.A."/>
            <person name="Kaul S."/>
            <person name="White O."/>
            <person name="Alonso J."/>
            <person name="Altafi H."/>
            <person name="Araujo R."/>
            <person name="Bowman C.L."/>
            <person name="Brooks S.Y."/>
            <person name="Buehler E."/>
            <person name="Chan A."/>
            <person name="Chao Q."/>
            <person name="Chen H."/>
            <person name="Cheuk R.F."/>
            <person name="Chin C.W."/>
            <person name="Chung M.K."/>
            <person name="Conn L."/>
            <person name="Conway A.B."/>
            <person name="Conway A.R."/>
            <person name="Creasy T.H."/>
            <person name="Dewar K."/>
            <person name="Dunn P."/>
            <person name="Etgu P."/>
            <person name="Feldblyum T.V."/>
            <person name="Feng J.-D."/>
            <person name="Fong B."/>
            <person name="Fujii C.Y."/>
            <person name="Gill J.E."/>
            <person name="Goldsmith A.D."/>
            <person name="Haas B."/>
            <person name="Hansen N.F."/>
            <person name="Hughes B."/>
            <person name="Huizar L."/>
            <person name="Hunter J.L."/>
            <person name="Jenkins J."/>
            <person name="Johnson-Hopson C."/>
            <person name="Khan S."/>
            <person name="Khaykin E."/>
            <person name="Kim C.J."/>
            <person name="Koo H.L."/>
            <person name="Kremenetskaia I."/>
            <person name="Kurtz D.B."/>
            <person name="Kwan A."/>
            <person name="Lam B."/>
            <person name="Langin-Hooper S."/>
            <person name="Lee A."/>
            <person name="Lee J.M."/>
            <person name="Lenz C.A."/>
            <person name="Li J.H."/>
            <person name="Li Y.-P."/>
            <person name="Lin X."/>
            <person name="Liu S.X."/>
            <person name="Liu Z.A."/>
            <person name="Luros J.S."/>
            <person name="Maiti R."/>
            <person name="Marziali A."/>
            <person name="Militscher J."/>
            <person name="Miranda M."/>
            <person name="Nguyen M."/>
            <person name="Nierman W.C."/>
            <person name="Osborne B.I."/>
            <person name="Pai G."/>
            <person name="Peterson J."/>
            <person name="Pham P.K."/>
            <person name="Rizzo M."/>
            <person name="Rooney T."/>
            <person name="Rowley D."/>
            <person name="Sakano H."/>
            <person name="Salzberg S.L."/>
            <person name="Schwartz J.R."/>
            <person name="Shinn P."/>
            <person name="Southwick A.M."/>
            <person name="Sun H."/>
            <person name="Tallon L.J."/>
            <person name="Tambunga G."/>
            <person name="Toriumi M.J."/>
            <person name="Town C.D."/>
            <person name="Utterback T."/>
            <person name="Van Aken S."/>
            <person name="Vaysberg M."/>
            <person name="Vysotskaia V.S."/>
            <person name="Walker M."/>
            <person name="Wu D."/>
            <person name="Yu G."/>
            <person name="Fraser C.M."/>
            <person name="Venter J.C."/>
            <person name="Davis R.W."/>
        </authorList>
    </citation>
    <scope>NUCLEOTIDE SEQUENCE [LARGE SCALE GENOMIC DNA]</scope>
    <source>
        <strain>cv. Columbia</strain>
    </source>
</reference>
<reference key="2">
    <citation type="journal article" date="2017" name="Plant J.">
        <title>Araport11: a complete reannotation of the Arabidopsis thaliana reference genome.</title>
        <authorList>
            <person name="Cheng C.Y."/>
            <person name="Krishnakumar V."/>
            <person name="Chan A.P."/>
            <person name="Thibaud-Nissen F."/>
            <person name="Schobel S."/>
            <person name="Town C.D."/>
        </authorList>
    </citation>
    <scope>GENOME REANNOTATION</scope>
    <source>
        <strain>cv. Columbia</strain>
    </source>
</reference>
<reference key="3">
    <citation type="journal article" date="2004" name="Genome Res.">
        <title>Whole genome sequence comparisons and 'full-length' cDNA sequences: a combined approach to evaluate and improve Arabidopsis genome annotation.</title>
        <authorList>
            <person name="Castelli V."/>
            <person name="Aury J.-M."/>
            <person name="Jaillon O."/>
            <person name="Wincker P."/>
            <person name="Clepet C."/>
            <person name="Menard M."/>
            <person name="Cruaud C."/>
            <person name="Quetier F."/>
            <person name="Scarpelli C."/>
            <person name="Schaechter V."/>
            <person name="Temple G."/>
            <person name="Caboche M."/>
            <person name="Weissenbach J."/>
            <person name="Salanoubat M."/>
        </authorList>
    </citation>
    <scope>NUCLEOTIDE SEQUENCE [LARGE SCALE MRNA]</scope>
    <source>
        <strain>cv. Columbia</strain>
    </source>
</reference>
<gene>
    <name type="ordered locus">At1g60410</name>
    <name type="ORF">T13D8.28</name>
</gene>
<evidence type="ECO:0000255" key="1">
    <source>
        <dbReference type="PROSITE-ProRule" id="PRU00080"/>
    </source>
</evidence>
<evidence type="ECO:0000305" key="2"/>
<feature type="chain" id="PRO_0000283136" description="FBD-associated F-box protein At1g60410">
    <location>
        <begin position="1"/>
        <end position="406"/>
    </location>
</feature>
<feature type="domain" description="F-box" evidence="1">
    <location>
        <begin position="9"/>
        <end position="59"/>
    </location>
</feature>
<feature type="domain" description="FBD">
    <location>
        <begin position="355"/>
        <end position="405"/>
    </location>
</feature>
<feature type="sequence conflict" description="In Ref. 3; BX814320." evidence="2" ref="3">
    <original>A</original>
    <variation>S</variation>
    <location>
        <position position="138"/>
    </location>
</feature>
<feature type="sequence conflict" description="In Ref. 3; BX814320." evidence="2" ref="3">
    <original>L</original>
    <variation>F</variation>
    <location>
        <position position="317"/>
    </location>
</feature>
<feature type="sequence conflict" description="In Ref. 3; BX814320." evidence="2" ref="3">
    <original>D</original>
    <variation>N</variation>
    <location>
        <position position="343"/>
    </location>
</feature>
<feature type="sequence conflict" description="In Ref. 3; BX814320." evidence="2" ref="3">
    <original>D</original>
    <variation>H</variation>
    <location>
        <position position="350"/>
    </location>
</feature>
<feature type="sequence conflict" description="In Ref. 3; BX814320." evidence="2" ref="3">
    <original>D</original>
    <variation>Y</variation>
    <location>
        <position position="372"/>
    </location>
</feature>
<feature type="sequence conflict" description="In Ref. 3; BX814320." evidence="2" ref="3">
    <original>K</original>
    <variation>I</variation>
    <location>
        <position position="386"/>
    </location>
</feature>
<accession>O80762</accession>
<organism>
    <name type="scientific">Arabidopsis thaliana</name>
    <name type="common">Mouse-ear cress</name>
    <dbReference type="NCBI Taxonomy" id="3702"/>
    <lineage>
        <taxon>Eukaryota</taxon>
        <taxon>Viridiplantae</taxon>
        <taxon>Streptophyta</taxon>
        <taxon>Embryophyta</taxon>
        <taxon>Tracheophyta</taxon>
        <taxon>Spermatophyta</taxon>
        <taxon>Magnoliopsida</taxon>
        <taxon>eudicotyledons</taxon>
        <taxon>Gunneridae</taxon>
        <taxon>Pentapetalae</taxon>
        <taxon>rosids</taxon>
        <taxon>malvids</taxon>
        <taxon>Brassicales</taxon>
        <taxon>Brassicaceae</taxon>
        <taxon>Camelineae</taxon>
        <taxon>Arabidopsis</taxon>
    </lineage>
</organism>
<keyword id="KW-1185">Reference proteome</keyword>